<keyword id="KW-0150">Chloroplast</keyword>
<keyword id="KW-0238">DNA-binding</keyword>
<keyword id="KW-0479">Metal-binding</keyword>
<keyword id="KW-0597">Phosphoprotein</keyword>
<keyword id="KW-0934">Plastid</keyword>
<keyword id="KW-1185">Reference proteome</keyword>
<keyword id="KW-0677">Repeat</keyword>
<keyword id="KW-0804">Transcription</keyword>
<keyword id="KW-0805">Transcription regulation</keyword>
<keyword id="KW-0809">Transit peptide</keyword>
<keyword id="KW-0862">Zinc</keyword>
<keyword id="KW-0863">Zinc-finger</keyword>
<organism>
    <name type="scientific">Arabidopsis thaliana</name>
    <name type="common">Mouse-ear cress</name>
    <dbReference type="NCBI Taxonomy" id="3702"/>
    <lineage>
        <taxon>Eukaryota</taxon>
        <taxon>Viridiplantae</taxon>
        <taxon>Streptophyta</taxon>
        <taxon>Embryophyta</taxon>
        <taxon>Tracheophyta</taxon>
        <taxon>Spermatophyta</taxon>
        <taxon>Magnoliopsida</taxon>
        <taxon>eudicotyledons</taxon>
        <taxon>Gunneridae</taxon>
        <taxon>Pentapetalae</taxon>
        <taxon>rosids</taxon>
        <taxon>malvids</taxon>
        <taxon>Brassicales</taxon>
        <taxon>Brassicaceae</taxon>
        <taxon>Camelineae</taxon>
        <taxon>Arabidopsis</taxon>
    </lineage>
</organism>
<evidence type="ECO:0000250" key="1">
    <source>
        <dbReference type="UniProtKB" id="Q700D2"/>
    </source>
</evidence>
<evidence type="ECO:0000255" key="2"/>
<evidence type="ECO:0000255" key="3">
    <source>
        <dbReference type="PROSITE-ProRule" id="PRU00042"/>
    </source>
</evidence>
<evidence type="ECO:0000256" key="4">
    <source>
        <dbReference type="SAM" id="MobiDB-lite"/>
    </source>
</evidence>
<evidence type="ECO:0000303" key="5">
    <source>
    </source>
</evidence>
<evidence type="ECO:0000305" key="6"/>
<evidence type="ECO:0000305" key="7">
    <source>
    </source>
</evidence>
<evidence type="ECO:0000312" key="8">
    <source>
        <dbReference type="Araport" id="AT1G14580"/>
    </source>
</evidence>
<evidence type="ECO:0000312" key="9">
    <source>
        <dbReference type="EMBL" id="AAF63168.1"/>
    </source>
</evidence>
<evidence type="ECO:0007744" key="10">
    <source>
    </source>
</evidence>
<sequence>MSSSYNTIALSSTPTFLLSSAAAGPGPNNFNRQEAAMTMVQQQPTSSVAPPPKKRRNQPGNPNPDAEVIALSPKTIMATNRFLCEVCNKGFQREQNLQLHRRGHNLPWKLKQKSNKEVRRKVYLCPEPSCVHHDPARALGDLTGIKKHYYRKHGEKKWKCDKCSKRYAVQSDWKAHSKTCGTKEYRCDCGTIFSRRDSYITHRAFCDALIQESARNPTVSFTAMAAGGGGGARHGFYGGASSALSHNHFGNNPNSGFTPLAAAGYNLNRSSSDKFEDFVPQATNPNPGPTNFLMQCSPNQGLLAQNNQSLMNHHGLISLGDNNNNNHNFFNLAYFQDTKNSDQTGVPSLFTNGADNNGPSALLRGLTSSSSSSVVVNDFGDCDHGNLQGLMNSLAATTDQQGRSPSLFDLHFANNLSMGGSDRLTLDFLGVNGGIVSTVNGRGGRSGGPPLDAEMKFSHPNHPYGKA</sequence>
<gene>
    <name evidence="5" type="primary">IDD6</name>
    <name evidence="8" type="ordered locus">At1g14580</name>
    <name evidence="9" type="ORF">T5E21.8</name>
</gene>
<name>IDD6_ARATH</name>
<feature type="transit peptide" description="Chloroplast" evidence="2">
    <location>
        <begin position="1"/>
        <end position="20"/>
    </location>
</feature>
<feature type="chain" id="PRO_0000431542" description="Protein indeterminate-domain 6, chloroplastic">
    <location>
        <begin position="21"/>
        <end position="467"/>
    </location>
</feature>
<feature type="zinc finger region" description="C2H2-type 1" evidence="3">
    <location>
        <begin position="82"/>
        <end position="104"/>
    </location>
</feature>
<feature type="zinc finger region" description="C2H2-type 2" evidence="6">
    <location>
        <begin position="123"/>
        <end position="153"/>
    </location>
</feature>
<feature type="zinc finger region" description="C2H2-type 2; degenerate" evidence="3">
    <location>
        <begin position="158"/>
        <end position="181"/>
    </location>
</feature>
<feature type="zinc finger region" description="CCHC-type 2; atypical" evidence="6">
    <location>
        <begin position="185"/>
        <end position="208"/>
    </location>
</feature>
<feature type="region of interest" description="Disordered" evidence="4">
    <location>
        <begin position="38"/>
        <end position="65"/>
    </location>
</feature>
<feature type="region of interest" description="SHR-binding" evidence="1">
    <location>
        <begin position="195"/>
        <end position="207"/>
    </location>
</feature>
<feature type="region of interest" description="Disordered" evidence="4">
    <location>
        <begin position="440"/>
        <end position="467"/>
    </location>
</feature>
<feature type="compositionally biased region" description="Polar residues" evidence="4">
    <location>
        <begin position="39"/>
        <end position="48"/>
    </location>
</feature>
<feature type="binding site" evidence="1">
    <location>
        <position position="160"/>
    </location>
    <ligand>
        <name>Zn(2+)</name>
        <dbReference type="ChEBI" id="CHEBI:29105"/>
        <label>1</label>
    </ligand>
</feature>
<feature type="binding site" evidence="1">
    <location>
        <position position="163"/>
    </location>
    <ligand>
        <name>Zn(2+)</name>
        <dbReference type="ChEBI" id="CHEBI:29105"/>
        <label>1</label>
    </ligand>
</feature>
<feature type="binding site" evidence="1">
    <location>
        <position position="176"/>
    </location>
    <ligand>
        <name>Zn(2+)</name>
        <dbReference type="ChEBI" id="CHEBI:29105"/>
        <label>1</label>
    </ligand>
</feature>
<feature type="binding site" evidence="1">
    <location>
        <position position="180"/>
    </location>
    <ligand>
        <name>Zn(2+)</name>
        <dbReference type="ChEBI" id="CHEBI:29105"/>
        <label>1</label>
    </ligand>
</feature>
<feature type="binding site" evidence="1">
    <location>
        <position position="187"/>
    </location>
    <ligand>
        <name>Zn(2+)</name>
        <dbReference type="ChEBI" id="CHEBI:29105"/>
        <label>2</label>
    </ligand>
</feature>
<feature type="binding site" evidence="1">
    <location>
        <position position="189"/>
    </location>
    <ligand>
        <name>Zn(2+)</name>
        <dbReference type="ChEBI" id="CHEBI:29105"/>
        <label>2</label>
    </ligand>
</feature>
<feature type="binding site" evidence="1">
    <location>
        <position position="202"/>
    </location>
    <ligand>
        <name>Zn(2+)</name>
        <dbReference type="ChEBI" id="CHEBI:29105"/>
        <label>2</label>
    </ligand>
</feature>
<feature type="binding site" evidence="1">
    <location>
        <position position="206"/>
    </location>
    <ligand>
        <name>Zn(2+)</name>
        <dbReference type="ChEBI" id="CHEBI:29105"/>
        <label>2</label>
    </ligand>
</feature>
<feature type="modified residue" description="Phosphoserine" evidence="10">
    <location>
        <position position="72"/>
    </location>
</feature>
<dbReference type="EMBL" id="AC010657">
    <property type="protein sequence ID" value="AAF63168.1"/>
    <property type="status" value="ALT_SEQ"/>
    <property type="molecule type" value="Genomic_DNA"/>
</dbReference>
<dbReference type="EMBL" id="CP002684">
    <property type="protein sequence ID" value="AEE29186.1"/>
    <property type="molecule type" value="Genomic_DNA"/>
</dbReference>
<dbReference type="EMBL" id="CP002684">
    <property type="protein sequence ID" value="AEE29187.1"/>
    <property type="molecule type" value="Genomic_DNA"/>
</dbReference>
<dbReference type="EMBL" id="AY091041">
    <property type="protein sequence ID" value="AAM13862.1"/>
    <property type="molecule type" value="mRNA"/>
</dbReference>
<dbReference type="EMBL" id="AY133766">
    <property type="protein sequence ID" value="AAM91700.1"/>
    <property type="molecule type" value="mRNA"/>
</dbReference>
<dbReference type="RefSeq" id="NP_001184994.1">
    <property type="nucleotide sequence ID" value="NM_001198065.2"/>
</dbReference>
<dbReference type="RefSeq" id="NP_172910.2">
    <property type="nucleotide sequence ID" value="NM_101325.4"/>
</dbReference>
<dbReference type="SMR" id="Q8RWX7"/>
<dbReference type="FunCoup" id="Q8RWX7">
    <property type="interactions" value="126"/>
</dbReference>
<dbReference type="IntAct" id="Q8RWX7">
    <property type="interactions" value="1"/>
</dbReference>
<dbReference type="STRING" id="3702.Q8RWX7"/>
<dbReference type="iPTMnet" id="Q8RWX7"/>
<dbReference type="PaxDb" id="3702-AT1G14580.1"/>
<dbReference type="EnsemblPlants" id="AT1G14580.1">
    <property type="protein sequence ID" value="AT1G14580.1"/>
    <property type="gene ID" value="AT1G14580"/>
</dbReference>
<dbReference type="EnsemblPlants" id="AT1G14580.2">
    <property type="protein sequence ID" value="AT1G14580.2"/>
    <property type="gene ID" value="AT1G14580"/>
</dbReference>
<dbReference type="GeneID" id="838020"/>
<dbReference type="Gramene" id="AT1G14580.1">
    <property type="protein sequence ID" value="AT1G14580.1"/>
    <property type="gene ID" value="AT1G14580"/>
</dbReference>
<dbReference type="Gramene" id="AT1G14580.2">
    <property type="protein sequence ID" value="AT1G14580.2"/>
    <property type="gene ID" value="AT1G14580"/>
</dbReference>
<dbReference type="KEGG" id="ath:AT1G14580"/>
<dbReference type="Araport" id="AT1G14580"/>
<dbReference type="TAIR" id="AT1G14580">
    <property type="gene designation" value="BLJ"/>
</dbReference>
<dbReference type="eggNOG" id="KOG1721">
    <property type="taxonomic scope" value="Eukaryota"/>
</dbReference>
<dbReference type="HOGENOM" id="CLU_014578_3_0_1"/>
<dbReference type="InParanoid" id="Q8RWX7"/>
<dbReference type="OMA" id="GNFQHNI"/>
<dbReference type="PhylomeDB" id="Q8RWX7"/>
<dbReference type="PRO" id="PR:Q8RWX7"/>
<dbReference type="Proteomes" id="UP000006548">
    <property type="component" value="Chromosome 1"/>
</dbReference>
<dbReference type="ExpressionAtlas" id="Q8RWX7">
    <property type="expression patterns" value="baseline and differential"/>
</dbReference>
<dbReference type="GO" id="GO:0009507">
    <property type="term" value="C:chloroplast"/>
    <property type="evidence" value="ECO:0007669"/>
    <property type="project" value="UniProtKB-SubCell"/>
</dbReference>
<dbReference type="GO" id="GO:0005634">
    <property type="term" value="C:nucleus"/>
    <property type="evidence" value="ECO:0000314"/>
    <property type="project" value="TAIR"/>
</dbReference>
<dbReference type="GO" id="GO:0003700">
    <property type="term" value="F:DNA-binding transcription factor activity"/>
    <property type="evidence" value="ECO:0000314"/>
    <property type="project" value="TAIR"/>
</dbReference>
<dbReference type="GO" id="GO:0000976">
    <property type="term" value="F:transcription cis-regulatory region binding"/>
    <property type="evidence" value="ECO:0000353"/>
    <property type="project" value="TAIR"/>
</dbReference>
<dbReference type="GO" id="GO:0008270">
    <property type="term" value="F:zinc ion binding"/>
    <property type="evidence" value="ECO:0007669"/>
    <property type="project" value="UniProtKB-KW"/>
</dbReference>
<dbReference type="GO" id="GO:0008356">
    <property type="term" value="P:asymmetric cell division"/>
    <property type="evidence" value="ECO:0000315"/>
    <property type="project" value="TAIR"/>
</dbReference>
<dbReference type="GO" id="GO:0048364">
    <property type="term" value="P:root development"/>
    <property type="evidence" value="ECO:0000316"/>
    <property type="project" value="TAIR"/>
</dbReference>
<dbReference type="FunFam" id="3.30.160.60:FF:000554">
    <property type="entry name" value="protein indeterminate-domain 12-like"/>
    <property type="match status" value="1"/>
</dbReference>
<dbReference type="FunFam" id="3.30.160.60:FF:000131">
    <property type="entry name" value="protein indeterminate-domain 5, chloroplastic-like"/>
    <property type="match status" value="1"/>
</dbReference>
<dbReference type="Gene3D" id="3.30.160.60">
    <property type="entry name" value="Classic Zinc Finger"/>
    <property type="match status" value="2"/>
</dbReference>
<dbReference type="InterPro" id="IPR055187">
    <property type="entry name" value="C2CH-3rd_BIRD-IDD"/>
</dbReference>
<dbReference type="InterPro" id="IPR055185">
    <property type="entry name" value="C2CH-4th_BIRD-IDD"/>
</dbReference>
<dbReference type="InterPro" id="IPR055186">
    <property type="entry name" value="C2H2-2nd_BIRD-IDD"/>
</dbReference>
<dbReference type="InterPro" id="IPR031140">
    <property type="entry name" value="IDD1-16"/>
</dbReference>
<dbReference type="InterPro" id="IPR036236">
    <property type="entry name" value="Znf_C2H2_sf"/>
</dbReference>
<dbReference type="InterPro" id="IPR013087">
    <property type="entry name" value="Znf_C2H2_type"/>
</dbReference>
<dbReference type="PANTHER" id="PTHR10593:SF175">
    <property type="entry name" value="PROTEIN INDETERMINATE-DOMAIN 6, CHLOROPLASTIC"/>
    <property type="match status" value="1"/>
</dbReference>
<dbReference type="PANTHER" id="PTHR10593">
    <property type="entry name" value="SERINE/THREONINE-PROTEIN KINASE RIO"/>
    <property type="match status" value="1"/>
</dbReference>
<dbReference type="Pfam" id="PF22995">
    <property type="entry name" value="C2CH-3rd_BIRD-IDD"/>
    <property type="match status" value="1"/>
</dbReference>
<dbReference type="Pfam" id="PF22992">
    <property type="entry name" value="C2CH-4th_BIRD-IDD"/>
    <property type="match status" value="1"/>
</dbReference>
<dbReference type="Pfam" id="PF22996">
    <property type="entry name" value="C2H2-2nd_BIRD-IDD"/>
    <property type="match status" value="1"/>
</dbReference>
<dbReference type="Pfam" id="PF00096">
    <property type="entry name" value="zf-C2H2"/>
    <property type="match status" value="1"/>
</dbReference>
<dbReference type="SMART" id="SM00355">
    <property type="entry name" value="ZnF_C2H2"/>
    <property type="match status" value="3"/>
</dbReference>
<dbReference type="SUPFAM" id="SSF57667">
    <property type="entry name" value="beta-beta-alpha zinc fingers"/>
    <property type="match status" value="1"/>
</dbReference>
<dbReference type="PROSITE" id="PS00028">
    <property type="entry name" value="ZINC_FINGER_C2H2_1"/>
    <property type="match status" value="1"/>
</dbReference>
<dbReference type="PROSITE" id="PS50157">
    <property type="entry name" value="ZINC_FINGER_C2H2_2"/>
    <property type="match status" value="1"/>
</dbReference>
<accession>Q8RWX7</accession>
<accession>Q9MA25</accession>
<reference key="1">
    <citation type="journal article" date="2000" name="Nature">
        <title>Sequence and analysis of chromosome 1 of the plant Arabidopsis thaliana.</title>
        <authorList>
            <person name="Theologis A."/>
            <person name="Ecker J.R."/>
            <person name="Palm C.J."/>
            <person name="Federspiel N.A."/>
            <person name="Kaul S."/>
            <person name="White O."/>
            <person name="Alonso J."/>
            <person name="Altafi H."/>
            <person name="Araujo R."/>
            <person name="Bowman C.L."/>
            <person name="Brooks S.Y."/>
            <person name="Buehler E."/>
            <person name="Chan A."/>
            <person name="Chao Q."/>
            <person name="Chen H."/>
            <person name="Cheuk R.F."/>
            <person name="Chin C.W."/>
            <person name="Chung M.K."/>
            <person name="Conn L."/>
            <person name="Conway A.B."/>
            <person name="Conway A.R."/>
            <person name="Creasy T.H."/>
            <person name="Dewar K."/>
            <person name="Dunn P."/>
            <person name="Etgu P."/>
            <person name="Feldblyum T.V."/>
            <person name="Feng J.-D."/>
            <person name="Fong B."/>
            <person name="Fujii C.Y."/>
            <person name="Gill J.E."/>
            <person name="Goldsmith A.D."/>
            <person name="Haas B."/>
            <person name="Hansen N.F."/>
            <person name="Hughes B."/>
            <person name="Huizar L."/>
            <person name="Hunter J.L."/>
            <person name="Jenkins J."/>
            <person name="Johnson-Hopson C."/>
            <person name="Khan S."/>
            <person name="Khaykin E."/>
            <person name="Kim C.J."/>
            <person name="Koo H.L."/>
            <person name="Kremenetskaia I."/>
            <person name="Kurtz D.B."/>
            <person name="Kwan A."/>
            <person name="Lam B."/>
            <person name="Langin-Hooper S."/>
            <person name="Lee A."/>
            <person name="Lee J.M."/>
            <person name="Lenz C.A."/>
            <person name="Li J.H."/>
            <person name="Li Y.-P."/>
            <person name="Lin X."/>
            <person name="Liu S.X."/>
            <person name="Liu Z.A."/>
            <person name="Luros J.S."/>
            <person name="Maiti R."/>
            <person name="Marziali A."/>
            <person name="Militscher J."/>
            <person name="Miranda M."/>
            <person name="Nguyen M."/>
            <person name="Nierman W.C."/>
            <person name="Osborne B.I."/>
            <person name="Pai G."/>
            <person name="Peterson J."/>
            <person name="Pham P.K."/>
            <person name="Rizzo M."/>
            <person name="Rooney T."/>
            <person name="Rowley D."/>
            <person name="Sakano H."/>
            <person name="Salzberg S.L."/>
            <person name="Schwartz J.R."/>
            <person name="Shinn P."/>
            <person name="Southwick A.M."/>
            <person name="Sun H."/>
            <person name="Tallon L.J."/>
            <person name="Tambunga G."/>
            <person name="Toriumi M.J."/>
            <person name="Town C.D."/>
            <person name="Utterback T."/>
            <person name="Van Aken S."/>
            <person name="Vaysberg M."/>
            <person name="Vysotskaia V.S."/>
            <person name="Walker M."/>
            <person name="Wu D."/>
            <person name="Yu G."/>
            <person name="Fraser C.M."/>
            <person name="Venter J.C."/>
            <person name="Davis R.W."/>
        </authorList>
    </citation>
    <scope>NUCLEOTIDE SEQUENCE [LARGE SCALE GENOMIC DNA]</scope>
    <source>
        <strain>cv. Columbia</strain>
    </source>
</reference>
<reference key="2">
    <citation type="journal article" date="2017" name="Plant J.">
        <title>Araport11: a complete reannotation of the Arabidopsis thaliana reference genome.</title>
        <authorList>
            <person name="Cheng C.Y."/>
            <person name="Krishnakumar V."/>
            <person name="Chan A.P."/>
            <person name="Thibaud-Nissen F."/>
            <person name="Schobel S."/>
            <person name="Town C.D."/>
        </authorList>
    </citation>
    <scope>GENOME REANNOTATION</scope>
    <source>
        <strain>cv. Columbia</strain>
    </source>
</reference>
<reference key="3">
    <citation type="journal article" date="2003" name="Science">
        <title>Empirical analysis of transcriptional activity in the Arabidopsis genome.</title>
        <authorList>
            <person name="Yamada K."/>
            <person name="Lim J."/>
            <person name="Dale J.M."/>
            <person name="Chen H."/>
            <person name="Shinn P."/>
            <person name="Palm C.J."/>
            <person name="Southwick A.M."/>
            <person name="Wu H.C."/>
            <person name="Kim C.J."/>
            <person name="Nguyen M."/>
            <person name="Pham P.K."/>
            <person name="Cheuk R.F."/>
            <person name="Karlin-Newmann G."/>
            <person name="Liu S.X."/>
            <person name="Lam B."/>
            <person name="Sakano H."/>
            <person name="Wu T."/>
            <person name="Yu G."/>
            <person name="Miranda M."/>
            <person name="Quach H.L."/>
            <person name="Tripp M."/>
            <person name="Chang C.H."/>
            <person name="Lee J.M."/>
            <person name="Toriumi M.J."/>
            <person name="Chan M.M."/>
            <person name="Tang C.C."/>
            <person name="Onodera C.S."/>
            <person name="Deng J.M."/>
            <person name="Akiyama K."/>
            <person name="Ansari Y."/>
            <person name="Arakawa T."/>
            <person name="Banh J."/>
            <person name="Banno F."/>
            <person name="Bowser L."/>
            <person name="Brooks S.Y."/>
            <person name="Carninci P."/>
            <person name="Chao Q."/>
            <person name="Choy N."/>
            <person name="Enju A."/>
            <person name="Goldsmith A.D."/>
            <person name="Gurjal M."/>
            <person name="Hansen N.F."/>
            <person name="Hayashizaki Y."/>
            <person name="Johnson-Hopson C."/>
            <person name="Hsuan V.W."/>
            <person name="Iida K."/>
            <person name="Karnes M."/>
            <person name="Khan S."/>
            <person name="Koesema E."/>
            <person name="Ishida J."/>
            <person name="Jiang P.X."/>
            <person name="Jones T."/>
            <person name="Kawai J."/>
            <person name="Kamiya A."/>
            <person name="Meyers C."/>
            <person name="Nakajima M."/>
            <person name="Narusaka M."/>
            <person name="Seki M."/>
            <person name="Sakurai T."/>
            <person name="Satou M."/>
            <person name="Tamse R."/>
            <person name="Vaysberg M."/>
            <person name="Wallender E.K."/>
            <person name="Wong C."/>
            <person name="Yamamura Y."/>
            <person name="Yuan S."/>
            <person name="Shinozaki K."/>
            <person name="Davis R.W."/>
            <person name="Theologis A."/>
            <person name="Ecker J.R."/>
        </authorList>
    </citation>
    <scope>NUCLEOTIDE SEQUENCE [LARGE SCALE MRNA]</scope>
    <source>
        <strain>cv. Columbia</strain>
    </source>
</reference>
<reference key="4">
    <citation type="journal article" date="2006" name="BMC Genomics">
        <title>The maize INDETERMINATE1 flowering time regulator defines a highly conserved zinc finger protein family in higher plants.</title>
        <authorList>
            <person name="Colasanti J."/>
            <person name="Tremblay R."/>
            <person name="Wong A.Y."/>
            <person name="Coneva V."/>
            <person name="Kozaki A."/>
            <person name="Mable B.K."/>
        </authorList>
    </citation>
    <scope>GENE FAMILY</scope>
    <scope>NOMENCLATURE</scope>
</reference>
<reference key="5">
    <citation type="journal article" date="2006" name="Gene">
        <title>Eukaryotic transcription factors in plastids--Bioinformatic assessment and implications for the evolution of gene expression machineries in plants.</title>
        <authorList>
            <person name="Wagner R."/>
            <person name="Pfannschmidt T."/>
        </authorList>
    </citation>
    <scope>SUBCELLULAR LOCATION</scope>
</reference>
<reference key="6">
    <citation type="journal article" date="2009" name="Plant Physiol.">
        <title>Large-scale Arabidopsis phosphoproteome profiling reveals novel chloroplast kinase substrates and phosphorylation networks.</title>
        <authorList>
            <person name="Reiland S."/>
            <person name="Messerli G."/>
            <person name="Baerenfaller K."/>
            <person name="Gerrits B."/>
            <person name="Endler A."/>
            <person name="Grossmann J."/>
            <person name="Gruissem W."/>
            <person name="Baginsky S."/>
        </authorList>
    </citation>
    <scope>PHOSPHORYLATION [LARGE SCALE ANALYSIS] AT SER-72</scope>
    <scope>IDENTIFICATION BY MASS SPECTROMETRY [LARGE SCALE ANALYSIS]</scope>
</reference>
<proteinExistence type="evidence at protein level"/>
<comment type="function">
    <text evidence="6">Probable transcription factor.</text>
</comment>
<comment type="subcellular location">
    <subcellularLocation>
        <location evidence="7">Plastid</location>
        <location evidence="7">Chloroplast</location>
    </subcellularLocation>
</comment>
<comment type="sequence caution" evidence="6">
    <conflict type="erroneous gene model prediction">
        <sequence resource="EMBL-CDS" id="AAF63168"/>
    </conflict>
</comment>
<protein>
    <recommendedName>
        <fullName evidence="5">Protein indeterminate-domain 6, chloroplastic</fullName>
    </recommendedName>
</protein>